<feature type="chain" id="PRO_0000148793" description="Aspartyl/glutamyl-tRNA(Asn/Gln) amidotransferase subunit B">
    <location>
        <begin position="1"/>
        <end position="474"/>
    </location>
</feature>
<reference key="1">
    <citation type="journal article" date="2003" name="Proc. Natl. Acad. Sci. U.S.A.">
        <title>The complete genome sequence of the carcinogenic bacterium Helicobacter hepaticus.</title>
        <authorList>
            <person name="Suerbaum S."/>
            <person name="Josenhans C."/>
            <person name="Sterzenbach T."/>
            <person name="Drescher B."/>
            <person name="Brandt P."/>
            <person name="Bell M."/>
            <person name="Droege M."/>
            <person name="Fartmann B."/>
            <person name="Fischer H.-P."/>
            <person name="Ge Z."/>
            <person name="Hoerster A."/>
            <person name="Holland R."/>
            <person name="Klein K."/>
            <person name="Koenig J."/>
            <person name="Macko L."/>
            <person name="Mendz G.L."/>
            <person name="Nyakatura G."/>
            <person name="Schauer D.B."/>
            <person name="Shen Z."/>
            <person name="Weber J."/>
            <person name="Frosch M."/>
            <person name="Fox J.G."/>
        </authorList>
    </citation>
    <scope>NUCLEOTIDE SEQUENCE [LARGE SCALE GENOMIC DNA]</scope>
    <source>
        <strain>ATCC 51449 / 3B1</strain>
    </source>
</reference>
<sequence length="474" mass="52621">MSAYETIIGLEVHVQLNTKTKIFCFCATSFGDEPNKNVCPTCLGLPGALPVLNREAVKKAISFGTAINATINQNSVFARKNYFYPDLPKAYQISQFEIPIVGRGSIEIECNNQTKTIGVTRAHLEEDAGKNIHENNYSKVDLNRACTPLLEIVSEPDMRSSDEAIAYLKKLHSIVRFLGISDANMQEGSFRCDANVSIRPKGDCKLYTRVEIKNLNSFKFIQKAIEYEVERQIEAWEEGKYQSEVVQETRLFDTAKGITRSMRGKEEAADYRYFPDPDLLPVFIDENLMREGVKIPEMPDEKRERYINTLGLKPYDAGVLTSSLELALYFESMLEEGASAKGALTWLTTELLGRLKGENTLQTCGVDSKTLATLVKRIEEGKISGKSGKEILDVLMEKGGDVDSLIDSMGLAQINDDGAIIAVIESVLSANADKVAEYKSGKDKLFGFFVGQVMKNSKGANPARVNELLKEKLG</sequence>
<organism>
    <name type="scientific">Helicobacter hepaticus (strain ATCC 51449 / 3B1)</name>
    <dbReference type="NCBI Taxonomy" id="235279"/>
    <lineage>
        <taxon>Bacteria</taxon>
        <taxon>Pseudomonadati</taxon>
        <taxon>Campylobacterota</taxon>
        <taxon>Epsilonproteobacteria</taxon>
        <taxon>Campylobacterales</taxon>
        <taxon>Helicobacteraceae</taxon>
        <taxon>Helicobacter</taxon>
    </lineage>
</organism>
<comment type="function">
    <text evidence="1">Allows the formation of correctly charged Asn-tRNA(Asn) or Gln-tRNA(Gln) through the transamidation of misacylated Asp-tRNA(Asn) or Glu-tRNA(Gln) in organisms which lack either or both of asparaginyl-tRNA or glutaminyl-tRNA synthetases. The reaction takes place in the presence of glutamine and ATP through an activated phospho-Asp-tRNA(Asn) or phospho-Glu-tRNA(Gln).</text>
</comment>
<comment type="catalytic activity">
    <reaction evidence="1">
        <text>L-glutamyl-tRNA(Gln) + L-glutamine + ATP + H2O = L-glutaminyl-tRNA(Gln) + L-glutamate + ADP + phosphate + H(+)</text>
        <dbReference type="Rhea" id="RHEA:17521"/>
        <dbReference type="Rhea" id="RHEA-COMP:9681"/>
        <dbReference type="Rhea" id="RHEA-COMP:9684"/>
        <dbReference type="ChEBI" id="CHEBI:15377"/>
        <dbReference type="ChEBI" id="CHEBI:15378"/>
        <dbReference type="ChEBI" id="CHEBI:29985"/>
        <dbReference type="ChEBI" id="CHEBI:30616"/>
        <dbReference type="ChEBI" id="CHEBI:43474"/>
        <dbReference type="ChEBI" id="CHEBI:58359"/>
        <dbReference type="ChEBI" id="CHEBI:78520"/>
        <dbReference type="ChEBI" id="CHEBI:78521"/>
        <dbReference type="ChEBI" id="CHEBI:456216"/>
    </reaction>
</comment>
<comment type="catalytic activity">
    <reaction evidence="1">
        <text>L-aspartyl-tRNA(Asn) + L-glutamine + ATP + H2O = L-asparaginyl-tRNA(Asn) + L-glutamate + ADP + phosphate + 2 H(+)</text>
        <dbReference type="Rhea" id="RHEA:14513"/>
        <dbReference type="Rhea" id="RHEA-COMP:9674"/>
        <dbReference type="Rhea" id="RHEA-COMP:9677"/>
        <dbReference type="ChEBI" id="CHEBI:15377"/>
        <dbReference type="ChEBI" id="CHEBI:15378"/>
        <dbReference type="ChEBI" id="CHEBI:29985"/>
        <dbReference type="ChEBI" id="CHEBI:30616"/>
        <dbReference type="ChEBI" id="CHEBI:43474"/>
        <dbReference type="ChEBI" id="CHEBI:58359"/>
        <dbReference type="ChEBI" id="CHEBI:78515"/>
        <dbReference type="ChEBI" id="CHEBI:78516"/>
        <dbReference type="ChEBI" id="CHEBI:456216"/>
    </reaction>
</comment>
<comment type="subunit">
    <text evidence="1">Heterotrimer of A, B and C subunits.</text>
</comment>
<comment type="similarity">
    <text evidence="1">Belongs to the GatB/GatE family. GatB subfamily.</text>
</comment>
<protein>
    <recommendedName>
        <fullName evidence="1">Aspartyl/glutamyl-tRNA(Asn/Gln) amidotransferase subunit B</fullName>
        <shortName evidence="1">Asp/Glu-ADT subunit B</shortName>
        <ecNumber evidence="1">6.3.5.-</ecNumber>
    </recommendedName>
</protein>
<name>GATB_HELHP</name>
<dbReference type="EC" id="6.3.5.-" evidence="1"/>
<dbReference type="EMBL" id="AE017125">
    <property type="protein sequence ID" value="AAP77393.1"/>
    <property type="molecule type" value="Genomic_DNA"/>
</dbReference>
<dbReference type="RefSeq" id="WP_011115638.1">
    <property type="nucleotide sequence ID" value="NC_004917.1"/>
</dbReference>
<dbReference type="SMR" id="Q7VI13"/>
<dbReference type="STRING" id="235279.HH_0796"/>
<dbReference type="GeneID" id="78150675"/>
<dbReference type="KEGG" id="hhe:HH_0796"/>
<dbReference type="eggNOG" id="COG0064">
    <property type="taxonomic scope" value="Bacteria"/>
</dbReference>
<dbReference type="HOGENOM" id="CLU_019240_0_0_7"/>
<dbReference type="OrthoDB" id="9804078at2"/>
<dbReference type="Proteomes" id="UP000002495">
    <property type="component" value="Chromosome"/>
</dbReference>
<dbReference type="GO" id="GO:0050566">
    <property type="term" value="F:asparaginyl-tRNA synthase (glutamine-hydrolyzing) activity"/>
    <property type="evidence" value="ECO:0007669"/>
    <property type="project" value="RHEA"/>
</dbReference>
<dbReference type="GO" id="GO:0005524">
    <property type="term" value="F:ATP binding"/>
    <property type="evidence" value="ECO:0007669"/>
    <property type="project" value="UniProtKB-KW"/>
</dbReference>
<dbReference type="GO" id="GO:0050567">
    <property type="term" value="F:glutaminyl-tRNA synthase (glutamine-hydrolyzing) activity"/>
    <property type="evidence" value="ECO:0007669"/>
    <property type="project" value="UniProtKB-UniRule"/>
</dbReference>
<dbReference type="GO" id="GO:0070681">
    <property type="term" value="P:glutaminyl-tRNAGln biosynthesis via transamidation"/>
    <property type="evidence" value="ECO:0007669"/>
    <property type="project" value="TreeGrafter"/>
</dbReference>
<dbReference type="GO" id="GO:0006412">
    <property type="term" value="P:translation"/>
    <property type="evidence" value="ECO:0007669"/>
    <property type="project" value="UniProtKB-UniRule"/>
</dbReference>
<dbReference type="FunFam" id="1.10.10.410:FF:000001">
    <property type="entry name" value="Aspartyl/glutamyl-tRNA(Asn/Gln) amidotransferase subunit B"/>
    <property type="match status" value="1"/>
</dbReference>
<dbReference type="FunFam" id="1.10.150.380:FF:000001">
    <property type="entry name" value="Aspartyl/glutamyl-tRNA(Asn/Gln) amidotransferase subunit B"/>
    <property type="match status" value="1"/>
</dbReference>
<dbReference type="Gene3D" id="1.10.10.410">
    <property type="match status" value="1"/>
</dbReference>
<dbReference type="Gene3D" id="1.10.150.380">
    <property type="entry name" value="GatB domain, N-terminal subdomain"/>
    <property type="match status" value="1"/>
</dbReference>
<dbReference type="HAMAP" id="MF_00121">
    <property type="entry name" value="GatB"/>
    <property type="match status" value="1"/>
</dbReference>
<dbReference type="InterPro" id="IPR017959">
    <property type="entry name" value="Asn/Gln-tRNA_amidoTrfase_suB/E"/>
</dbReference>
<dbReference type="InterPro" id="IPR006075">
    <property type="entry name" value="Asn/Gln-tRNA_Trfase_suB/E_cat"/>
</dbReference>
<dbReference type="InterPro" id="IPR018027">
    <property type="entry name" value="Asn/Gln_amidotransferase"/>
</dbReference>
<dbReference type="InterPro" id="IPR003789">
    <property type="entry name" value="Asn/Gln_tRNA_amidoTrase-B-like"/>
</dbReference>
<dbReference type="InterPro" id="IPR004413">
    <property type="entry name" value="GatB"/>
</dbReference>
<dbReference type="InterPro" id="IPR042114">
    <property type="entry name" value="GatB_C_1"/>
</dbReference>
<dbReference type="InterPro" id="IPR023168">
    <property type="entry name" value="GatB_Yqey_C_2"/>
</dbReference>
<dbReference type="InterPro" id="IPR017958">
    <property type="entry name" value="Gln-tRNA_amidoTrfase_suB_CS"/>
</dbReference>
<dbReference type="InterPro" id="IPR014746">
    <property type="entry name" value="Gln_synth/guanido_kin_cat_dom"/>
</dbReference>
<dbReference type="NCBIfam" id="TIGR00133">
    <property type="entry name" value="gatB"/>
    <property type="match status" value="1"/>
</dbReference>
<dbReference type="NCBIfam" id="NF004012">
    <property type="entry name" value="PRK05477.1-2"/>
    <property type="match status" value="1"/>
</dbReference>
<dbReference type="NCBIfam" id="NF004014">
    <property type="entry name" value="PRK05477.1-4"/>
    <property type="match status" value="1"/>
</dbReference>
<dbReference type="PANTHER" id="PTHR11659">
    <property type="entry name" value="GLUTAMYL-TRNA GLN AMIDOTRANSFERASE SUBUNIT B MITOCHONDRIAL AND PROKARYOTIC PET112-RELATED"/>
    <property type="match status" value="1"/>
</dbReference>
<dbReference type="PANTHER" id="PTHR11659:SF0">
    <property type="entry name" value="GLUTAMYL-TRNA(GLN) AMIDOTRANSFERASE SUBUNIT B, MITOCHONDRIAL"/>
    <property type="match status" value="1"/>
</dbReference>
<dbReference type="Pfam" id="PF02934">
    <property type="entry name" value="GatB_N"/>
    <property type="match status" value="1"/>
</dbReference>
<dbReference type="Pfam" id="PF02637">
    <property type="entry name" value="GatB_Yqey"/>
    <property type="match status" value="1"/>
</dbReference>
<dbReference type="SMART" id="SM00845">
    <property type="entry name" value="GatB_Yqey"/>
    <property type="match status" value="1"/>
</dbReference>
<dbReference type="SUPFAM" id="SSF89095">
    <property type="entry name" value="GatB/YqeY motif"/>
    <property type="match status" value="1"/>
</dbReference>
<dbReference type="SUPFAM" id="SSF55931">
    <property type="entry name" value="Glutamine synthetase/guanido kinase"/>
    <property type="match status" value="1"/>
</dbReference>
<dbReference type="PROSITE" id="PS01234">
    <property type="entry name" value="GATB"/>
    <property type="match status" value="1"/>
</dbReference>
<evidence type="ECO:0000255" key="1">
    <source>
        <dbReference type="HAMAP-Rule" id="MF_00121"/>
    </source>
</evidence>
<gene>
    <name evidence="1" type="primary">gatB</name>
    <name type="ordered locus">HH_0796</name>
</gene>
<proteinExistence type="inferred from homology"/>
<accession>Q7VI13</accession>
<keyword id="KW-0067">ATP-binding</keyword>
<keyword id="KW-0436">Ligase</keyword>
<keyword id="KW-0547">Nucleotide-binding</keyword>
<keyword id="KW-0648">Protein biosynthesis</keyword>
<keyword id="KW-1185">Reference proteome</keyword>